<name>Y2167_ARCFU</name>
<reference key="1">
    <citation type="journal article" date="1997" name="Nature">
        <title>The complete genome sequence of the hyperthermophilic, sulphate-reducing archaeon Archaeoglobus fulgidus.</title>
        <authorList>
            <person name="Klenk H.-P."/>
            <person name="Clayton R.A."/>
            <person name="Tomb J.-F."/>
            <person name="White O."/>
            <person name="Nelson K.E."/>
            <person name="Ketchum K.A."/>
            <person name="Dodson R.J."/>
            <person name="Gwinn M.L."/>
            <person name="Hickey E.K."/>
            <person name="Peterson J.D."/>
            <person name="Richardson D.L."/>
            <person name="Kerlavage A.R."/>
            <person name="Graham D.E."/>
            <person name="Kyrpides N.C."/>
            <person name="Fleischmann R.D."/>
            <person name="Quackenbush J."/>
            <person name="Lee N.H."/>
            <person name="Sutton G.G."/>
            <person name="Gill S.R."/>
            <person name="Kirkness E.F."/>
            <person name="Dougherty B.A."/>
            <person name="McKenney K."/>
            <person name="Adams M.D."/>
            <person name="Loftus B.J."/>
            <person name="Peterson S.N."/>
            <person name="Reich C.I."/>
            <person name="McNeil L.K."/>
            <person name="Badger J.H."/>
            <person name="Glodek A."/>
            <person name="Zhou L."/>
            <person name="Overbeek R."/>
            <person name="Gocayne J.D."/>
            <person name="Weidman J.F."/>
            <person name="McDonald L.A."/>
            <person name="Utterback T.R."/>
            <person name="Cotton M.D."/>
            <person name="Spriggs T."/>
            <person name="Artiach P."/>
            <person name="Kaine B.P."/>
            <person name="Sykes S.M."/>
            <person name="Sadow P.W."/>
            <person name="D'Andrea K.P."/>
            <person name="Bowman C."/>
            <person name="Fujii C."/>
            <person name="Garland S.A."/>
            <person name="Mason T.M."/>
            <person name="Olsen G.J."/>
            <person name="Fraser C.M."/>
            <person name="Smith H.O."/>
            <person name="Woese C.R."/>
            <person name="Venter J.C."/>
        </authorList>
    </citation>
    <scope>NUCLEOTIDE SEQUENCE [LARGE SCALE GENOMIC DNA]</scope>
    <source>
        <strain>ATCC 49558 / DSM 4304 / JCM 9628 / NBRC 100126 / VC-16</strain>
    </source>
</reference>
<organism>
    <name type="scientific">Archaeoglobus fulgidus (strain ATCC 49558 / DSM 4304 / JCM 9628 / NBRC 100126 / VC-16)</name>
    <dbReference type="NCBI Taxonomy" id="224325"/>
    <lineage>
        <taxon>Archaea</taxon>
        <taxon>Methanobacteriati</taxon>
        <taxon>Methanobacteriota</taxon>
        <taxon>Archaeoglobi</taxon>
        <taxon>Archaeoglobales</taxon>
        <taxon>Archaeoglobaceae</taxon>
        <taxon>Archaeoglobus</taxon>
    </lineage>
</organism>
<proteinExistence type="predicted"/>
<keyword id="KW-1185">Reference proteome</keyword>
<feature type="chain" id="PRO_0000128110" description="Uncharacterized protein AF_2167">
    <location>
        <begin position="1"/>
        <end position="313"/>
    </location>
</feature>
<gene>
    <name type="ordered locus">AF_2167</name>
</gene>
<sequence>MVINRMIGKIAAFRKMPVSDFKFDLNPRIKKRLEIMKENMKGGVMFIPDVGVVWVTPKPSRIISLENEREVGEEILKVVMQKYKTNINFSELGWKLGGMGLENDGFLRTSVKGVDNNQGAVFRVDDPKCWDDIKAAESSMEKNRPKDYPWDSNVDNRDVLDCSSESGCAHIVNQILEENEAVYYSGHGSNYCILIKGEKNSNKINFCSKDVAYGRQTRLFVVSACYAGNGLAEWLVEKWVRCVIADDGELYDYNYWSPCAAWADAFWDRVTGNVDAGYRRTPHEARIETNNLFGWIPRNCNLDVERGDCNFYI</sequence>
<protein>
    <recommendedName>
        <fullName>Uncharacterized protein AF_2167</fullName>
    </recommendedName>
</protein>
<dbReference type="EMBL" id="AE000782">
    <property type="protein sequence ID" value="AAB89094.1"/>
    <property type="molecule type" value="Genomic_DNA"/>
</dbReference>
<dbReference type="PIR" id="G69520">
    <property type="entry name" value="G69520"/>
</dbReference>
<dbReference type="STRING" id="224325.AF_2167"/>
<dbReference type="PaxDb" id="224325-AF_2167"/>
<dbReference type="EnsemblBacteria" id="AAB89094">
    <property type="protein sequence ID" value="AAB89094"/>
    <property type="gene ID" value="AF_2167"/>
</dbReference>
<dbReference type="KEGG" id="afu:AF_2167"/>
<dbReference type="HOGENOM" id="CLU_901949_0_0_2"/>
<dbReference type="Proteomes" id="UP000002199">
    <property type="component" value="Chromosome"/>
</dbReference>
<accession>O28115</accession>